<feature type="chain" id="PRO_1000185734" description="Polyribonucleotide nucleotidyltransferase">
    <location>
        <begin position="1"/>
        <end position="727"/>
    </location>
</feature>
<feature type="domain" description="KH" evidence="1">
    <location>
        <begin position="555"/>
        <end position="614"/>
    </location>
</feature>
<feature type="domain" description="S1 motif" evidence="1">
    <location>
        <begin position="624"/>
        <end position="692"/>
    </location>
</feature>
<feature type="region of interest" description="Disordered" evidence="2">
    <location>
        <begin position="691"/>
        <end position="727"/>
    </location>
</feature>
<feature type="compositionally biased region" description="Basic and acidic residues" evidence="2">
    <location>
        <begin position="707"/>
        <end position="720"/>
    </location>
</feature>
<feature type="binding site" evidence="1">
    <location>
        <position position="488"/>
    </location>
    <ligand>
        <name>Mg(2+)</name>
        <dbReference type="ChEBI" id="CHEBI:18420"/>
    </ligand>
</feature>
<feature type="binding site" evidence="1">
    <location>
        <position position="494"/>
    </location>
    <ligand>
        <name>Mg(2+)</name>
        <dbReference type="ChEBI" id="CHEBI:18420"/>
    </ligand>
</feature>
<dbReference type="EC" id="2.7.7.8" evidence="1"/>
<dbReference type="EMBL" id="CP001392">
    <property type="protein sequence ID" value="ACM32346.1"/>
    <property type="molecule type" value="Genomic_DNA"/>
</dbReference>
<dbReference type="RefSeq" id="WP_015912606.1">
    <property type="nucleotide sequence ID" value="NC_011992.1"/>
</dbReference>
<dbReference type="SMR" id="B9MEL0"/>
<dbReference type="KEGG" id="dia:Dtpsy_0868"/>
<dbReference type="eggNOG" id="COG1185">
    <property type="taxonomic scope" value="Bacteria"/>
</dbReference>
<dbReference type="HOGENOM" id="CLU_004217_2_2_4"/>
<dbReference type="Proteomes" id="UP000000450">
    <property type="component" value="Chromosome"/>
</dbReference>
<dbReference type="GO" id="GO:0005829">
    <property type="term" value="C:cytosol"/>
    <property type="evidence" value="ECO:0007669"/>
    <property type="project" value="TreeGrafter"/>
</dbReference>
<dbReference type="GO" id="GO:0000175">
    <property type="term" value="F:3'-5'-RNA exonuclease activity"/>
    <property type="evidence" value="ECO:0007669"/>
    <property type="project" value="TreeGrafter"/>
</dbReference>
<dbReference type="GO" id="GO:0000287">
    <property type="term" value="F:magnesium ion binding"/>
    <property type="evidence" value="ECO:0007669"/>
    <property type="project" value="UniProtKB-UniRule"/>
</dbReference>
<dbReference type="GO" id="GO:0004654">
    <property type="term" value="F:polyribonucleotide nucleotidyltransferase activity"/>
    <property type="evidence" value="ECO:0007669"/>
    <property type="project" value="UniProtKB-UniRule"/>
</dbReference>
<dbReference type="GO" id="GO:0003723">
    <property type="term" value="F:RNA binding"/>
    <property type="evidence" value="ECO:0007669"/>
    <property type="project" value="UniProtKB-UniRule"/>
</dbReference>
<dbReference type="GO" id="GO:0006402">
    <property type="term" value="P:mRNA catabolic process"/>
    <property type="evidence" value="ECO:0007669"/>
    <property type="project" value="UniProtKB-UniRule"/>
</dbReference>
<dbReference type="GO" id="GO:0006396">
    <property type="term" value="P:RNA processing"/>
    <property type="evidence" value="ECO:0007669"/>
    <property type="project" value="InterPro"/>
</dbReference>
<dbReference type="CDD" id="cd02393">
    <property type="entry name" value="KH-I_PNPase"/>
    <property type="match status" value="1"/>
</dbReference>
<dbReference type="CDD" id="cd11363">
    <property type="entry name" value="RNase_PH_PNPase_1"/>
    <property type="match status" value="1"/>
</dbReference>
<dbReference type="CDD" id="cd11364">
    <property type="entry name" value="RNase_PH_PNPase_2"/>
    <property type="match status" value="1"/>
</dbReference>
<dbReference type="CDD" id="cd04472">
    <property type="entry name" value="S1_PNPase"/>
    <property type="match status" value="1"/>
</dbReference>
<dbReference type="FunFam" id="2.40.50.140:FF:000023">
    <property type="entry name" value="Polyribonucleotide nucleotidyltransferase"/>
    <property type="match status" value="1"/>
</dbReference>
<dbReference type="FunFam" id="3.30.1370.10:FF:000001">
    <property type="entry name" value="Polyribonucleotide nucleotidyltransferase"/>
    <property type="match status" value="1"/>
</dbReference>
<dbReference type="FunFam" id="3.30.230.70:FF:000001">
    <property type="entry name" value="Polyribonucleotide nucleotidyltransferase"/>
    <property type="match status" value="1"/>
</dbReference>
<dbReference type="FunFam" id="3.30.230.70:FF:000002">
    <property type="entry name" value="Polyribonucleotide nucleotidyltransferase"/>
    <property type="match status" value="1"/>
</dbReference>
<dbReference type="Gene3D" id="3.30.230.70">
    <property type="entry name" value="GHMP Kinase, N-terminal domain"/>
    <property type="match status" value="2"/>
</dbReference>
<dbReference type="Gene3D" id="3.30.1370.10">
    <property type="entry name" value="K Homology domain, type 1"/>
    <property type="match status" value="1"/>
</dbReference>
<dbReference type="Gene3D" id="2.40.50.140">
    <property type="entry name" value="Nucleic acid-binding proteins"/>
    <property type="match status" value="1"/>
</dbReference>
<dbReference type="HAMAP" id="MF_01595">
    <property type="entry name" value="PNPase"/>
    <property type="match status" value="1"/>
</dbReference>
<dbReference type="InterPro" id="IPR001247">
    <property type="entry name" value="ExoRNase_PH_dom1"/>
</dbReference>
<dbReference type="InterPro" id="IPR015847">
    <property type="entry name" value="ExoRNase_PH_dom2"/>
</dbReference>
<dbReference type="InterPro" id="IPR036345">
    <property type="entry name" value="ExoRNase_PH_dom2_sf"/>
</dbReference>
<dbReference type="InterPro" id="IPR004087">
    <property type="entry name" value="KH_dom"/>
</dbReference>
<dbReference type="InterPro" id="IPR004088">
    <property type="entry name" value="KH_dom_type_1"/>
</dbReference>
<dbReference type="InterPro" id="IPR036612">
    <property type="entry name" value="KH_dom_type_1_sf"/>
</dbReference>
<dbReference type="InterPro" id="IPR012340">
    <property type="entry name" value="NA-bd_OB-fold"/>
</dbReference>
<dbReference type="InterPro" id="IPR012162">
    <property type="entry name" value="PNPase"/>
</dbReference>
<dbReference type="InterPro" id="IPR027408">
    <property type="entry name" value="PNPase/RNase_PH_dom_sf"/>
</dbReference>
<dbReference type="InterPro" id="IPR015848">
    <property type="entry name" value="PNPase_PH_RNA-bd_bac/org-type"/>
</dbReference>
<dbReference type="InterPro" id="IPR036456">
    <property type="entry name" value="PNPase_PH_RNA-bd_sf"/>
</dbReference>
<dbReference type="InterPro" id="IPR020568">
    <property type="entry name" value="Ribosomal_Su5_D2-typ_SF"/>
</dbReference>
<dbReference type="InterPro" id="IPR003029">
    <property type="entry name" value="S1_domain"/>
</dbReference>
<dbReference type="NCBIfam" id="TIGR03591">
    <property type="entry name" value="polynuc_phos"/>
    <property type="match status" value="1"/>
</dbReference>
<dbReference type="NCBIfam" id="NF008805">
    <property type="entry name" value="PRK11824.1"/>
    <property type="match status" value="1"/>
</dbReference>
<dbReference type="PANTHER" id="PTHR11252">
    <property type="entry name" value="POLYRIBONUCLEOTIDE NUCLEOTIDYLTRANSFERASE"/>
    <property type="match status" value="1"/>
</dbReference>
<dbReference type="PANTHER" id="PTHR11252:SF0">
    <property type="entry name" value="POLYRIBONUCLEOTIDE NUCLEOTIDYLTRANSFERASE 1, MITOCHONDRIAL"/>
    <property type="match status" value="1"/>
</dbReference>
<dbReference type="Pfam" id="PF00013">
    <property type="entry name" value="KH_1"/>
    <property type="match status" value="1"/>
</dbReference>
<dbReference type="Pfam" id="PF03726">
    <property type="entry name" value="PNPase"/>
    <property type="match status" value="1"/>
</dbReference>
<dbReference type="Pfam" id="PF01138">
    <property type="entry name" value="RNase_PH"/>
    <property type="match status" value="2"/>
</dbReference>
<dbReference type="Pfam" id="PF03725">
    <property type="entry name" value="RNase_PH_C"/>
    <property type="match status" value="2"/>
</dbReference>
<dbReference type="Pfam" id="PF00575">
    <property type="entry name" value="S1"/>
    <property type="match status" value="1"/>
</dbReference>
<dbReference type="PIRSF" id="PIRSF005499">
    <property type="entry name" value="PNPase"/>
    <property type="match status" value="1"/>
</dbReference>
<dbReference type="SMART" id="SM00322">
    <property type="entry name" value="KH"/>
    <property type="match status" value="1"/>
</dbReference>
<dbReference type="SMART" id="SM00316">
    <property type="entry name" value="S1"/>
    <property type="match status" value="1"/>
</dbReference>
<dbReference type="SUPFAM" id="SSF54791">
    <property type="entry name" value="Eukaryotic type KH-domain (KH-domain type I)"/>
    <property type="match status" value="1"/>
</dbReference>
<dbReference type="SUPFAM" id="SSF50249">
    <property type="entry name" value="Nucleic acid-binding proteins"/>
    <property type="match status" value="1"/>
</dbReference>
<dbReference type="SUPFAM" id="SSF46915">
    <property type="entry name" value="Polynucleotide phosphorylase/guanosine pentaphosphate synthase (PNPase/GPSI), domain 3"/>
    <property type="match status" value="1"/>
</dbReference>
<dbReference type="SUPFAM" id="SSF55666">
    <property type="entry name" value="Ribonuclease PH domain 2-like"/>
    <property type="match status" value="2"/>
</dbReference>
<dbReference type="SUPFAM" id="SSF54211">
    <property type="entry name" value="Ribosomal protein S5 domain 2-like"/>
    <property type="match status" value="2"/>
</dbReference>
<dbReference type="PROSITE" id="PS50084">
    <property type="entry name" value="KH_TYPE_1"/>
    <property type="match status" value="1"/>
</dbReference>
<dbReference type="PROSITE" id="PS50126">
    <property type="entry name" value="S1"/>
    <property type="match status" value="1"/>
</dbReference>
<reference key="1">
    <citation type="submission" date="2009-01" db="EMBL/GenBank/DDBJ databases">
        <title>Complete sequence of Diaphorobacter sp. TPSY.</title>
        <authorList>
            <consortium name="US DOE Joint Genome Institute"/>
            <person name="Lucas S."/>
            <person name="Copeland A."/>
            <person name="Lapidus A."/>
            <person name="Glavina del Rio T."/>
            <person name="Tice H."/>
            <person name="Bruce D."/>
            <person name="Goodwin L."/>
            <person name="Pitluck S."/>
            <person name="Chertkov O."/>
            <person name="Brettin T."/>
            <person name="Detter J.C."/>
            <person name="Han C."/>
            <person name="Larimer F."/>
            <person name="Land M."/>
            <person name="Hauser L."/>
            <person name="Kyrpides N."/>
            <person name="Mikhailova N."/>
            <person name="Coates J.D."/>
        </authorList>
    </citation>
    <scope>NUCLEOTIDE SEQUENCE [LARGE SCALE GENOMIC DNA]</scope>
    <source>
        <strain>TPSY</strain>
    </source>
</reference>
<name>PNP_ACIET</name>
<sequence length="727" mass="78808">MSIFNKVTKSFQWGDKTVVMETGEIARQASGAVLVNIDDTVVLATVVGSKQAKPGQDFFPLTVDYIEKTYAAGKIPGSFFKREAKPSELETLTSRLIDRPIRPLFPEGFYNEVHVVIHTISLNPEVDADIAAMIAVSAALSVSGIPFNGPIGAARVGYVNGEYVLNPGQTARKSSQLDLVVAGTEAAVLMVESEAQQLSEEIMLGAVVFGHEQGKVAINAIHELVRDAGKPVWDWQPPAKDETFIAKVTALAEDKLRAAYQIRSKQARTQALREASASVLESLKGEGVEFDAVKVEALLFDIEAKIVRSQILAGEPRIDGRDTRTVRPIEIRNSVLPRTHGSALFTRGETQALVVSTLGTERDAQRIDALAGEFEDRFIFHYNMPPFATGEVGRMGSTKRREIGHGRLAKRALVACLPSKDEFPYTIRVVSEITESNGSSSMASVCGGCLSLMDAGVPMKAHVAGIAMGLIKEDNRFAVLTDILGDEDHLGDMDFKVAGTTNGITALQMDIKIQGITKEIMQVALAQAKEARMHILGKMQEAMGEAKTEISSFAPKLYTMKINPEKIRDVIGKGGATIRALTDETGCQINIEEDGTITIAATEAAKADEAKRRIEEITAEVEVGKVYEGPVTKILDFGALINLLPGKDGLLHISQIAHERVEKVGDYLQEGQVVKVKVLETDDKGRVKLSMKALADRPAGDSGRPAPAERGERRERRDGGASEQQQQ</sequence>
<comment type="function">
    <text evidence="1">Involved in mRNA degradation. Catalyzes the phosphorolysis of single-stranded polyribonucleotides processively in the 3'- to 5'-direction.</text>
</comment>
<comment type="catalytic activity">
    <reaction evidence="1">
        <text>RNA(n+1) + phosphate = RNA(n) + a ribonucleoside 5'-diphosphate</text>
        <dbReference type="Rhea" id="RHEA:22096"/>
        <dbReference type="Rhea" id="RHEA-COMP:14527"/>
        <dbReference type="Rhea" id="RHEA-COMP:17342"/>
        <dbReference type="ChEBI" id="CHEBI:43474"/>
        <dbReference type="ChEBI" id="CHEBI:57930"/>
        <dbReference type="ChEBI" id="CHEBI:140395"/>
        <dbReference type="EC" id="2.7.7.8"/>
    </reaction>
</comment>
<comment type="cofactor">
    <cofactor evidence="1">
        <name>Mg(2+)</name>
        <dbReference type="ChEBI" id="CHEBI:18420"/>
    </cofactor>
</comment>
<comment type="subcellular location">
    <subcellularLocation>
        <location evidence="1">Cytoplasm</location>
    </subcellularLocation>
</comment>
<comment type="similarity">
    <text evidence="1">Belongs to the polyribonucleotide nucleotidyltransferase family.</text>
</comment>
<proteinExistence type="inferred from homology"/>
<accession>B9MEL0</accession>
<protein>
    <recommendedName>
        <fullName evidence="1">Polyribonucleotide nucleotidyltransferase</fullName>
        <ecNumber evidence="1">2.7.7.8</ecNumber>
    </recommendedName>
    <alternativeName>
        <fullName evidence="1">Polynucleotide phosphorylase</fullName>
        <shortName evidence="1">PNPase</shortName>
    </alternativeName>
</protein>
<evidence type="ECO:0000255" key="1">
    <source>
        <dbReference type="HAMAP-Rule" id="MF_01595"/>
    </source>
</evidence>
<evidence type="ECO:0000256" key="2">
    <source>
        <dbReference type="SAM" id="MobiDB-lite"/>
    </source>
</evidence>
<keyword id="KW-0963">Cytoplasm</keyword>
<keyword id="KW-0460">Magnesium</keyword>
<keyword id="KW-0479">Metal-binding</keyword>
<keyword id="KW-0548">Nucleotidyltransferase</keyword>
<keyword id="KW-1185">Reference proteome</keyword>
<keyword id="KW-0694">RNA-binding</keyword>
<keyword id="KW-0808">Transferase</keyword>
<gene>
    <name evidence="1" type="primary">pnp</name>
    <name type="ordered locus">Dtpsy_0868</name>
</gene>
<organism>
    <name type="scientific">Acidovorax ebreus (strain TPSY)</name>
    <name type="common">Diaphorobacter sp. (strain TPSY)</name>
    <dbReference type="NCBI Taxonomy" id="535289"/>
    <lineage>
        <taxon>Bacteria</taxon>
        <taxon>Pseudomonadati</taxon>
        <taxon>Pseudomonadota</taxon>
        <taxon>Betaproteobacteria</taxon>
        <taxon>Burkholderiales</taxon>
        <taxon>Comamonadaceae</taxon>
        <taxon>Diaphorobacter</taxon>
    </lineage>
</organism>